<evidence type="ECO:0000255" key="1">
    <source>
        <dbReference type="PROSITE-ProRule" id="PRU00395"/>
    </source>
</evidence>
<evidence type="ECO:0000269" key="2">
    <source>
    </source>
</evidence>
<evidence type="ECO:0000303" key="3">
    <source>
    </source>
</evidence>
<evidence type="ECO:0000305" key="4"/>
<evidence type="ECO:0000305" key="5">
    <source>
    </source>
</evidence>
<reference evidence="4" key="1">
    <citation type="journal article" date="2009" name="Org. Biomol. Chem.">
        <title>Circular proteins from Melicytus (Violaceae) refine the conserved protein and gene architecture of cyclotides.</title>
        <authorList>
            <person name="Trabi M."/>
            <person name="Mylne J.S."/>
            <person name="Sando L."/>
            <person name="Craik D.J."/>
        </authorList>
    </citation>
    <scope>PROTEIN SEQUENCE</scope>
    <scope>MASS SPECTROMETRY</scope>
    <scope>PRESENCE OF DISULFIDE BONDS</scope>
    <source>
        <tissue evidence="3">Leaf</tissue>
    </source>
</reference>
<accession>C0HL34</accession>
<keyword id="KW-0903">Direct protein sequencing</keyword>
<keyword id="KW-1015">Disulfide bond</keyword>
<keyword id="KW-0960">Knottin</keyword>
<keyword id="KW-0611">Plant defense</keyword>
<protein>
    <recommendedName>
        <fullName evidence="3">Cyclotide mra3</fullName>
    </recommendedName>
</protein>
<sequence length="31" mass="3243">GSIPCGESCVYIPCITSIVGCSCKSKVCYKN</sequence>
<dbReference type="SMR" id="C0HL34"/>
<dbReference type="GO" id="GO:0006952">
    <property type="term" value="P:defense response"/>
    <property type="evidence" value="ECO:0007669"/>
    <property type="project" value="UniProtKB-KW"/>
</dbReference>
<dbReference type="InterPro" id="IPR005535">
    <property type="entry name" value="Cyclotide"/>
</dbReference>
<dbReference type="InterPro" id="IPR012323">
    <property type="entry name" value="Cyclotide_bracelet_CS"/>
</dbReference>
<dbReference type="InterPro" id="IPR036146">
    <property type="entry name" value="Cyclotide_sf"/>
</dbReference>
<dbReference type="Pfam" id="PF03784">
    <property type="entry name" value="Cyclotide"/>
    <property type="match status" value="1"/>
</dbReference>
<dbReference type="PIRSF" id="PIRSF037891">
    <property type="entry name" value="Cycloviolacin"/>
    <property type="match status" value="1"/>
</dbReference>
<dbReference type="SUPFAM" id="SSF57038">
    <property type="entry name" value="Cyclotides"/>
    <property type="match status" value="1"/>
</dbReference>
<dbReference type="PROSITE" id="PS51052">
    <property type="entry name" value="CYCLOTIDE"/>
    <property type="match status" value="1"/>
</dbReference>
<dbReference type="PROSITE" id="PS60008">
    <property type="entry name" value="CYCLOTIDE_BRACELET"/>
    <property type="match status" value="1"/>
</dbReference>
<name>CYMR3_MELRA</name>
<organism evidence="3">
    <name type="scientific">Melicytus ramiflorus</name>
    <name type="common">Whitey wood</name>
    <dbReference type="NCBI Taxonomy" id="316498"/>
    <lineage>
        <taxon>Eukaryota</taxon>
        <taxon>Viridiplantae</taxon>
        <taxon>Streptophyta</taxon>
        <taxon>Embryophyta</taxon>
        <taxon>Tracheophyta</taxon>
        <taxon>Spermatophyta</taxon>
        <taxon>Magnoliopsida</taxon>
        <taxon>eudicotyledons</taxon>
        <taxon>Gunneridae</taxon>
        <taxon>Pentapetalae</taxon>
        <taxon>rosids</taxon>
        <taxon>fabids</taxon>
        <taxon>Malpighiales</taxon>
        <taxon>Violaceae</taxon>
        <taxon>Melicytus</taxon>
    </lineage>
</organism>
<comment type="function">
    <text evidence="1">Probably participates in a plant defense mechanism.</text>
</comment>
<comment type="domain">
    <text evidence="4">The presence of a 'disulfide through disulfide knot' structurally defines this protein as a knottin.</text>
</comment>
<comment type="PTM">
    <text evidence="1 2">This is a cyclic peptide.</text>
</comment>
<comment type="PTM">
    <text evidence="2">Contains 3 disulfide bonds.</text>
</comment>
<comment type="mass spectrometry" mass="3219.0" method="Electrospray" evidence="2"/>
<comment type="similarity">
    <text evidence="1">Belongs to the cyclotide family. Bracelet subfamily.</text>
</comment>
<comment type="caution">
    <text evidence="5">This peptide is cyclic. The start position was chosen by similarity to cyclotide mra4 for which the DNA sequence is known.</text>
</comment>
<proteinExistence type="evidence at protein level"/>
<feature type="peptide" id="PRO_0000441831" description="Cyclotide mra3" evidence="2">
    <location>
        <begin position="1"/>
        <end position="31"/>
    </location>
</feature>
<feature type="disulfide bond" evidence="1">
    <location>
        <begin position="5"/>
        <end position="21"/>
    </location>
</feature>
<feature type="disulfide bond" evidence="1">
    <location>
        <begin position="9"/>
        <end position="23"/>
    </location>
</feature>
<feature type="disulfide bond" evidence="1">
    <location>
        <begin position="14"/>
        <end position="28"/>
    </location>
</feature>